<accession>Q250L9</accession>
<reference key="1">
    <citation type="journal article" date="2006" name="J. Bacteriol.">
        <title>Complete genome sequence of the dehalorespiring bacterium Desulfitobacterium hafniense Y51 and comparison with Dehalococcoides ethenogenes 195.</title>
        <authorList>
            <person name="Nonaka H."/>
            <person name="Keresztes G."/>
            <person name="Shinoda Y."/>
            <person name="Ikenaga Y."/>
            <person name="Abe M."/>
            <person name="Naito K."/>
            <person name="Inatomi K."/>
            <person name="Furukawa K."/>
            <person name="Inui M."/>
            <person name="Yukawa H."/>
        </authorList>
    </citation>
    <scope>NUCLEOTIDE SEQUENCE [LARGE SCALE GENOMIC DNA]</scope>
    <source>
        <strain>Y51</strain>
    </source>
</reference>
<gene>
    <name evidence="1" type="primary">rpsZ</name>
    <name evidence="1" type="synonym">rpsN</name>
    <name type="ordered locus">DSY0484</name>
</gene>
<evidence type="ECO:0000255" key="1">
    <source>
        <dbReference type="HAMAP-Rule" id="MF_01364"/>
    </source>
</evidence>
<evidence type="ECO:0000305" key="2"/>
<feature type="chain" id="PRO_0000269096" description="Small ribosomal subunit protein uS14">
    <location>
        <begin position="1"/>
        <end position="61"/>
    </location>
</feature>
<feature type="binding site" evidence="1">
    <location>
        <position position="24"/>
    </location>
    <ligand>
        <name>Zn(2+)</name>
        <dbReference type="ChEBI" id="CHEBI:29105"/>
    </ligand>
</feature>
<feature type="binding site" evidence="1">
    <location>
        <position position="27"/>
    </location>
    <ligand>
        <name>Zn(2+)</name>
        <dbReference type="ChEBI" id="CHEBI:29105"/>
    </ligand>
</feature>
<feature type="binding site" evidence="1">
    <location>
        <position position="40"/>
    </location>
    <ligand>
        <name>Zn(2+)</name>
        <dbReference type="ChEBI" id="CHEBI:29105"/>
    </ligand>
</feature>
<feature type="binding site" evidence="1">
    <location>
        <position position="43"/>
    </location>
    <ligand>
        <name>Zn(2+)</name>
        <dbReference type="ChEBI" id="CHEBI:29105"/>
    </ligand>
</feature>
<proteinExistence type="inferred from homology"/>
<organism>
    <name type="scientific">Desulfitobacterium hafniense (strain Y51)</name>
    <dbReference type="NCBI Taxonomy" id="138119"/>
    <lineage>
        <taxon>Bacteria</taxon>
        <taxon>Bacillati</taxon>
        <taxon>Bacillota</taxon>
        <taxon>Clostridia</taxon>
        <taxon>Eubacteriales</taxon>
        <taxon>Desulfitobacteriaceae</taxon>
        <taxon>Desulfitobacterium</taxon>
    </lineage>
</organism>
<sequence length="61" mass="7174">MAKKSMIVRNARQPKYAVRHHNRCKLCGRPHAYIRKFGICRICFRELAYKGELPGVKKASW</sequence>
<dbReference type="EMBL" id="AP008230">
    <property type="protein sequence ID" value="BAE82273.1"/>
    <property type="molecule type" value="Genomic_DNA"/>
</dbReference>
<dbReference type="RefSeq" id="WP_011459104.1">
    <property type="nucleotide sequence ID" value="NC_007907.1"/>
</dbReference>
<dbReference type="SMR" id="Q250L9"/>
<dbReference type="STRING" id="138119.DSY0484"/>
<dbReference type="KEGG" id="dsy:DSY0484"/>
<dbReference type="eggNOG" id="COG0199">
    <property type="taxonomic scope" value="Bacteria"/>
</dbReference>
<dbReference type="HOGENOM" id="CLU_139869_3_0_9"/>
<dbReference type="Proteomes" id="UP000001946">
    <property type="component" value="Chromosome"/>
</dbReference>
<dbReference type="GO" id="GO:0005737">
    <property type="term" value="C:cytoplasm"/>
    <property type="evidence" value="ECO:0007669"/>
    <property type="project" value="UniProtKB-ARBA"/>
</dbReference>
<dbReference type="GO" id="GO:0015935">
    <property type="term" value="C:small ribosomal subunit"/>
    <property type="evidence" value="ECO:0007669"/>
    <property type="project" value="TreeGrafter"/>
</dbReference>
<dbReference type="GO" id="GO:0019843">
    <property type="term" value="F:rRNA binding"/>
    <property type="evidence" value="ECO:0007669"/>
    <property type="project" value="UniProtKB-UniRule"/>
</dbReference>
<dbReference type="GO" id="GO:0003735">
    <property type="term" value="F:structural constituent of ribosome"/>
    <property type="evidence" value="ECO:0007669"/>
    <property type="project" value="InterPro"/>
</dbReference>
<dbReference type="GO" id="GO:0008270">
    <property type="term" value="F:zinc ion binding"/>
    <property type="evidence" value="ECO:0007669"/>
    <property type="project" value="UniProtKB-UniRule"/>
</dbReference>
<dbReference type="GO" id="GO:0006412">
    <property type="term" value="P:translation"/>
    <property type="evidence" value="ECO:0007669"/>
    <property type="project" value="UniProtKB-UniRule"/>
</dbReference>
<dbReference type="FunFam" id="4.10.830.10:FF:000001">
    <property type="entry name" value="30S ribosomal protein S14 type Z"/>
    <property type="match status" value="1"/>
</dbReference>
<dbReference type="Gene3D" id="4.10.830.10">
    <property type="entry name" value="30s Ribosomal Protein S14, Chain N"/>
    <property type="match status" value="1"/>
</dbReference>
<dbReference type="HAMAP" id="MF_01364_B">
    <property type="entry name" value="Ribosomal_uS14_2_B"/>
    <property type="match status" value="1"/>
</dbReference>
<dbReference type="InterPro" id="IPR001209">
    <property type="entry name" value="Ribosomal_uS14"/>
</dbReference>
<dbReference type="InterPro" id="IPR023053">
    <property type="entry name" value="Ribosomal_uS14_bact"/>
</dbReference>
<dbReference type="InterPro" id="IPR018271">
    <property type="entry name" value="Ribosomal_uS14_CS"/>
</dbReference>
<dbReference type="InterPro" id="IPR043140">
    <property type="entry name" value="Ribosomal_uS14_sf"/>
</dbReference>
<dbReference type="NCBIfam" id="NF005974">
    <property type="entry name" value="PRK08061.1"/>
    <property type="match status" value="1"/>
</dbReference>
<dbReference type="PANTHER" id="PTHR19836">
    <property type="entry name" value="30S RIBOSOMAL PROTEIN S14"/>
    <property type="match status" value="1"/>
</dbReference>
<dbReference type="PANTHER" id="PTHR19836:SF19">
    <property type="entry name" value="SMALL RIBOSOMAL SUBUNIT PROTEIN US14M"/>
    <property type="match status" value="1"/>
</dbReference>
<dbReference type="Pfam" id="PF00253">
    <property type="entry name" value="Ribosomal_S14"/>
    <property type="match status" value="1"/>
</dbReference>
<dbReference type="SUPFAM" id="SSF57716">
    <property type="entry name" value="Glucocorticoid receptor-like (DNA-binding domain)"/>
    <property type="match status" value="1"/>
</dbReference>
<dbReference type="PROSITE" id="PS00527">
    <property type="entry name" value="RIBOSOMAL_S14"/>
    <property type="match status" value="1"/>
</dbReference>
<protein>
    <recommendedName>
        <fullName evidence="1">Small ribosomal subunit protein uS14</fullName>
    </recommendedName>
    <alternativeName>
        <fullName evidence="2">30S ribosomal protein S14 type Z</fullName>
    </alternativeName>
</protein>
<keyword id="KW-0479">Metal-binding</keyword>
<keyword id="KW-1185">Reference proteome</keyword>
<keyword id="KW-0687">Ribonucleoprotein</keyword>
<keyword id="KW-0689">Ribosomal protein</keyword>
<keyword id="KW-0694">RNA-binding</keyword>
<keyword id="KW-0699">rRNA-binding</keyword>
<keyword id="KW-0862">Zinc</keyword>
<name>RS14Z_DESHY</name>
<comment type="function">
    <text evidence="1">Binds 16S rRNA, required for the assembly of 30S particles and may also be responsible for determining the conformation of the 16S rRNA at the A site.</text>
</comment>
<comment type="cofactor">
    <cofactor evidence="1">
        <name>Zn(2+)</name>
        <dbReference type="ChEBI" id="CHEBI:29105"/>
    </cofactor>
    <text evidence="1">Binds 1 zinc ion per subunit.</text>
</comment>
<comment type="subunit">
    <text evidence="1">Part of the 30S ribosomal subunit. Contacts proteins S3 and S10.</text>
</comment>
<comment type="similarity">
    <text evidence="1">Belongs to the universal ribosomal protein uS14 family. Zinc-binding uS14 subfamily.</text>
</comment>